<proteinExistence type="inferred from homology"/>
<comment type="catalytic activity">
    <reaction evidence="1">
        <text>urea + 2 H2O + H(+) = hydrogencarbonate + 2 NH4(+)</text>
        <dbReference type="Rhea" id="RHEA:20557"/>
        <dbReference type="ChEBI" id="CHEBI:15377"/>
        <dbReference type="ChEBI" id="CHEBI:15378"/>
        <dbReference type="ChEBI" id="CHEBI:16199"/>
        <dbReference type="ChEBI" id="CHEBI:17544"/>
        <dbReference type="ChEBI" id="CHEBI:28938"/>
        <dbReference type="EC" id="3.5.1.5"/>
    </reaction>
</comment>
<comment type="pathway">
    <text evidence="1">Nitrogen metabolism; urea degradation; CO(2) and NH(3) from urea (urease route): step 1/1.</text>
</comment>
<comment type="subunit">
    <text evidence="1">Heterotrimer of UreA (gamma), UreB (beta) and UreC (alpha) subunits. Three heterotrimers associate to form the active enzyme.</text>
</comment>
<comment type="subcellular location">
    <subcellularLocation>
        <location evidence="1">Cytoplasm</location>
    </subcellularLocation>
</comment>
<comment type="similarity">
    <text evidence="1">Belongs to the urease gamma subunit family.</text>
</comment>
<keyword id="KW-0963">Cytoplasm</keyword>
<keyword id="KW-0378">Hydrolase</keyword>
<organism>
    <name type="scientific">Pseudomonas putida (strain ATCC 700007 / DSM 6899 / JCM 31910 / BCRC 17059 / LMG 24140 / F1)</name>
    <dbReference type="NCBI Taxonomy" id="351746"/>
    <lineage>
        <taxon>Bacteria</taxon>
        <taxon>Pseudomonadati</taxon>
        <taxon>Pseudomonadota</taxon>
        <taxon>Gammaproteobacteria</taxon>
        <taxon>Pseudomonadales</taxon>
        <taxon>Pseudomonadaceae</taxon>
        <taxon>Pseudomonas</taxon>
    </lineage>
</organism>
<name>URE3_PSEP1</name>
<dbReference type="EC" id="3.5.1.5" evidence="1"/>
<dbReference type="EMBL" id="CP000712">
    <property type="protein sequence ID" value="ABQ78978.1"/>
    <property type="molecule type" value="Genomic_DNA"/>
</dbReference>
<dbReference type="SMR" id="A5W4B8"/>
<dbReference type="KEGG" id="ppf:Pput_2846"/>
<dbReference type="eggNOG" id="COG0831">
    <property type="taxonomic scope" value="Bacteria"/>
</dbReference>
<dbReference type="HOGENOM" id="CLU_145825_1_0_6"/>
<dbReference type="UniPathway" id="UPA00258">
    <property type="reaction ID" value="UER00370"/>
</dbReference>
<dbReference type="GO" id="GO:0005737">
    <property type="term" value="C:cytoplasm"/>
    <property type="evidence" value="ECO:0007669"/>
    <property type="project" value="UniProtKB-SubCell"/>
</dbReference>
<dbReference type="GO" id="GO:0016151">
    <property type="term" value="F:nickel cation binding"/>
    <property type="evidence" value="ECO:0007669"/>
    <property type="project" value="InterPro"/>
</dbReference>
<dbReference type="GO" id="GO:0009039">
    <property type="term" value="F:urease activity"/>
    <property type="evidence" value="ECO:0007669"/>
    <property type="project" value="UniProtKB-UniRule"/>
</dbReference>
<dbReference type="GO" id="GO:0043419">
    <property type="term" value="P:urea catabolic process"/>
    <property type="evidence" value="ECO:0007669"/>
    <property type="project" value="UniProtKB-UniRule"/>
</dbReference>
<dbReference type="CDD" id="cd00390">
    <property type="entry name" value="Urease_gamma"/>
    <property type="match status" value="1"/>
</dbReference>
<dbReference type="Gene3D" id="3.30.280.10">
    <property type="entry name" value="Urease, gamma-like subunit"/>
    <property type="match status" value="1"/>
</dbReference>
<dbReference type="HAMAP" id="MF_00739">
    <property type="entry name" value="Urease_gamma"/>
    <property type="match status" value="1"/>
</dbReference>
<dbReference type="InterPro" id="IPR012010">
    <property type="entry name" value="Urease_gamma"/>
</dbReference>
<dbReference type="InterPro" id="IPR002026">
    <property type="entry name" value="Urease_gamma/gamma-beta_su"/>
</dbReference>
<dbReference type="InterPro" id="IPR036463">
    <property type="entry name" value="Urease_gamma_sf"/>
</dbReference>
<dbReference type="InterPro" id="IPR050069">
    <property type="entry name" value="Urease_subunit"/>
</dbReference>
<dbReference type="NCBIfam" id="NF009712">
    <property type="entry name" value="PRK13241.1"/>
    <property type="match status" value="1"/>
</dbReference>
<dbReference type="NCBIfam" id="TIGR00193">
    <property type="entry name" value="urease_gam"/>
    <property type="match status" value="1"/>
</dbReference>
<dbReference type="PANTHER" id="PTHR33569">
    <property type="entry name" value="UREASE"/>
    <property type="match status" value="1"/>
</dbReference>
<dbReference type="PANTHER" id="PTHR33569:SF1">
    <property type="entry name" value="UREASE"/>
    <property type="match status" value="1"/>
</dbReference>
<dbReference type="Pfam" id="PF00547">
    <property type="entry name" value="Urease_gamma"/>
    <property type="match status" value="1"/>
</dbReference>
<dbReference type="PIRSF" id="PIRSF001223">
    <property type="entry name" value="Urease_gamma"/>
    <property type="match status" value="1"/>
</dbReference>
<dbReference type="SUPFAM" id="SSF54111">
    <property type="entry name" value="Urease, gamma-subunit"/>
    <property type="match status" value="1"/>
</dbReference>
<feature type="chain" id="PRO_1000046356" description="Urease subunit gamma">
    <location>
        <begin position="1"/>
        <end position="100"/>
    </location>
</feature>
<sequence length="100" mass="10978">MELTPREKDKLLLFTAALLAERRLARGLKLNYPEAVALISAAVLEGARDGRTVAELMSLGREVLTREQVMPGIAEMLHDVQVEATFPDGTKLVTVHDPIV</sequence>
<gene>
    <name evidence="1" type="primary">ureA</name>
    <name type="ordered locus">Pput_2846</name>
</gene>
<accession>A5W4B8</accession>
<protein>
    <recommendedName>
        <fullName evidence="1">Urease subunit gamma</fullName>
        <ecNumber evidence="1">3.5.1.5</ecNumber>
    </recommendedName>
    <alternativeName>
        <fullName evidence="1">Urea amidohydrolase subunit gamma</fullName>
    </alternativeName>
</protein>
<evidence type="ECO:0000255" key="1">
    <source>
        <dbReference type="HAMAP-Rule" id="MF_00739"/>
    </source>
</evidence>
<reference key="1">
    <citation type="submission" date="2007-05" db="EMBL/GenBank/DDBJ databases">
        <title>Complete sequence of Pseudomonas putida F1.</title>
        <authorList>
            <consortium name="US DOE Joint Genome Institute"/>
            <person name="Copeland A."/>
            <person name="Lucas S."/>
            <person name="Lapidus A."/>
            <person name="Barry K."/>
            <person name="Detter J.C."/>
            <person name="Glavina del Rio T."/>
            <person name="Hammon N."/>
            <person name="Israni S."/>
            <person name="Dalin E."/>
            <person name="Tice H."/>
            <person name="Pitluck S."/>
            <person name="Chain P."/>
            <person name="Malfatti S."/>
            <person name="Shin M."/>
            <person name="Vergez L."/>
            <person name="Schmutz J."/>
            <person name="Larimer F."/>
            <person name="Land M."/>
            <person name="Hauser L."/>
            <person name="Kyrpides N."/>
            <person name="Lykidis A."/>
            <person name="Parales R."/>
            <person name="Richardson P."/>
        </authorList>
    </citation>
    <scope>NUCLEOTIDE SEQUENCE [LARGE SCALE GENOMIC DNA]</scope>
    <source>
        <strain>ATCC 700007 / DSM 6899 / JCM 31910 / BCRC 17059 / LMG 24140 / F1</strain>
    </source>
</reference>